<keyword id="KW-0058">Aromatic hydrocarbons catabolism</keyword>
<keyword id="KW-0456">Lyase</keyword>
<keyword id="KW-0464">Manganese</keyword>
<keyword id="KW-0479">Metal-binding</keyword>
<protein>
    <recommendedName>
        <fullName evidence="1">4-hydroxy-2-oxovalerate aldolase 1</fullName>
        <shortName evidence="1">HOA 1</shortName>
        <ecNumber evidence="1">4.1.3.39</ecNumber>
    </recommendedName>
    <alternativeName>
        <fullName evidence="1">4-hydroxy-2-keto-pentanoic acid aldolase 1</fullName>
    </alternativeName>
    <alternativeName>
        <fullName evidence="1">4-hydroxy-2-oxopentanoate aldolase 1</fullName>
    </alternativeName>
</protein>
<gene>
    <name type="ordered locus">MUL_2435</name>
</gene>
<evidence type="ECO:0000255" key="1">
    <source>
        <dbReference type="HAMAP-Rule" id="MF_01656"/>
    </source>
</evidence>
<name>HOA1_MYCUA</name>
<dbReference type="EC" id="4.1.3.39" evidence="1"/>
<dbReference type="EMBL" id="CP000325">
    <property type="protein sequence ID" value="ABL04787.1"/>
    <property type="molecule type" value="Genomic_DNA"/>
</dbReference>
<dbReference type="RefSeq" id="WP_011740402.1">
    <property type="nucleotide sequence ID" value="NC_008611.1"/>
</dbReference>
<dbReference type="SMR" id="A0PR18"/>
<dbReference type="KEGG" id="mul:MUL_2435"/>
<dbReference type="eggNOG" id="COG0119">
    <property type="taxonomic scope" value="Bacteria"/>
</dbReference>
<dbReference type="HOGENOM" id="CLU_049173_0_0_11"/>
<dbReference type="Proteomes" id="UP000000765">
    <property type="component" value="Chromosome"/>
</dbReference>
<dbReference type="GO" id="GO:0003852">
    <property type="term" value="F:2-isopropylmalate synthase activity"/>
    <property type="evidence" value="ECO:0007669"/>
    <property type="project" value="TreeGrafter"/>
</dbReference>
<dbReference type="GO" id="GO:0008701">
    <property type="term" value="F:4-hydroxy-2-oxovalerate aldolase activity"/>
    <property type="evidence" value="ECO:0007669"/>
    <property type="project" value="UniProtKB-UniRule"/>
</dbReference>
<dbReference type="GO" id="GO:0030145">
    <property type="term" value="F:manganese ion binding"/>
    <property type="evidence" value="ECO:0007669"/>
    <property type="project" value="UniProtKB-UniRule"/>
</dbReference>
<dbReference type="GO" id="GO:0009056">
    <property type="term" value="P:catabolic process"/>
    <property type="evidence" value="ECO:0007669"/>
    <property type="project" value="UniProtKB-KW"/>
</dbReference>
<dbReference type="GO" id="GO:0009098">
    <property type="term" value="P:L-leucine biosynthetic process"/>
    <property type="evidence" value="ECO:0007669"/>
    <property type="project" value="TreeGrafter"/>
</dbReference>
<dbReference type="CDD" id="cd07943">
    <property type="entry name" value="DRE_TIM_HOA"/>
    <property type="match status" value="1"/>
</dbReference>
<dbReference type="Gene3D" id="1.10.8.60">
    <property type="match status" value="1"/>
</dbReference>
<dbReference type="Gene3D" id="3.20.20.70">
    <property type="entry name" value="Aldolase class I"/>
    <property type="match status" value="1"/>
</dbReference>
<dbReference type="HAMAP" id="MF_01656">
    <property type="entry name" value="HOA"/>
    <property type="match status" value="1"/>
</dbReference>
<dbReference type="InterPro" id="IPR050073">
    <property type="entry name" value="2-IPM_HCS-like"/>
</dbReference>
<dbReference type="InterPro" id="IPR017629">
    <property type="entry name" value="4OH_2_O-val_aldolase"/>
</dbReference>
<dbReference type="InterPro" id="IPR013785">
    <property type="entry name" value="Aldolase_TIM"/>
</dbReference>
<dbReference type="InterPro" id="IPR012425">
    <property type="entry name" value="DmpG_comm"/>
</dbReference>
<dbReference type="InterPro" id="IPR035685">
    <property type="entry name" value="DRE_TIM_HOA"/>
</dbReference>
<dbReference type="InterPro" id="IPR000891">
    <property type="entry name" value="PYR_CT"/>
</dbReference>
<dbReference type="NCBIfam" id="TIGR03217">
    <property type="entry name" value="4OH_2_O_val_ald"/>
    <property type="match status" value="1"/>
</dbReference>
<dbReference type="NCBIfam" id="NF006049">
    <property type="entry name" value="PRK08195.1"/>
    <property type="match status" value="1"/>
</dbReference>
<dbReference type="PANTHER" id="PTHR10277:SF9">
    <property type="entry name" value="2-ISOPROPYLMALATE SYNTHASE 1, CHLOROPLASTIC-RELATED"/>
    <property type="match status" value="1"/>
</dbReference>
<dbReference type="PANTHER" id="PTHR10277">
    <property type="entry name" value="HOMOCITRATE SYNTHASE-RELATED"/>
    <property type="match status" value="1"/>
</dbReference>
<dbReference type="Pfam" id="PF07836">
    <property type="entry name" value="DmpG_comm"/>
    <property type="match status" value="1"/>
</dbReference>
<dbReference type="Pfam" id="PF00682">
    <property type="entry name" value="HMGL-like"/>
    <property type="match status" value="1"/>
</dbReference>
<dbReference type="SUPFAM" id="SSF51569">
    <property type="entry name" value="Aldolase"/>
    <property type="match status" value="1"/>
</dbReference>
<dbReference type="SUPFAM" id="SSF89000">
    <property type="entry name" value="post-HMGL domain-like"/>
    <property type="match status" value="1"/>
</dbReference>
<dbReference type="PROSITE" id="PS50991">
    <property type="entry name" value="PYR_CT"/>
    <property type="match status" value="1"/>
</dbReference>
<proteinExistence type="inferred from homology"/>
<sequence>MIGDLYISDVTLRDGMHAVRHQDGIAQAVAIARALDDAGVDSIEVAHGDGLGGSSCCYGFGAHTDLEWIEAVAGAVDRARVATLLLPGIGGVAHLEDAHRAGATVVRVGTHCTEADLAARYLGAARDLGMDAVGFLMMSHLTTPKLLAEQAKLLEGYGASCVYVVDSGGAMTGAAVAQRFDALRQNLDPATELGIHAHHNLSLGVANSVVAVEHGARRIDASLAGMGAGAGNVPLEVLIAVVNRLGWTHGCELNALEDAADDLVRPLQDRPVRIDRETLTLGYAGVYSSFLRHAEITAGRYGVDARSLLEEAGRRGLIGGQEDLLVDIALDLVGPAEPLAHGAP</sequence>
<organism>
    <name type="scientific">Mycobacterium ulcerans (strain Agy99)</name>
    <dbReference type="NCBI Taxonomy" id="362242"/>
    <lineage>
        <taxon>Bacteria</taxon>
        <taxon>Bacillati</taxon>
        <taxon>Actinomycetota</taxon>
        <taxon>Actinomycetes</taxon>
        <taxon>Mycobacteriales</taxon>
        <taxon>Mycobacteriaceae</taxon>
        <taxon>Mycobacterium</taxon>
        <taxon>Mycobacterium ulcerans group</taxon>
    </lineage>
</organism>
<comment type="catalytic activity">
    <reaction evidence="1">
        <text>(S)-4-hydroxy-2-oxopentanoate = acetaldehyde + pyruvate</text>
        <dbReference type="Rhea" id="RHEA:22624"/>
        <dbReference type="ChEBI" id="CHEBI:15343"/>
        <dbReference type="ChEBI" id="CHEBI:15361"/>
        <dbReference type="ChEBI" id="CHEBI:73143"/>
        <dbReference type="EC" id="4.1.3.39"/>
    </reaction>
</comment>
<comment type="similarity">
    <text evidence="1">Belongs to the 4-hydroxy-2-oxovalerate aldolase family.</text>
</comment>
<accession>A0PR18</accession>
<feature type="chain" id="PRO_0000387864" description="4-hydroxy-2-oxovalerate aldolase 1">
    <location>
        <begin position="1"/>
        <end position="344"/>
    </location>
</feature>
<feature type="domain" description="Pyruvate carboxyltransferase" evidence="1">
    <location>
        <begin position="5"/>
        <end position="257"/>
    </location>
</feature>
<feature type="active site" description="Proton acceptor" evidence="1">
    <location>
        <position position="17"/>
    </location>
</feature>
<feature type="binding site" evidence="1">
    <location>
        <begin position="13"/>
        <end position="14"/>
    </location>
    <ligand>
        <name>substrate</name>
    </ligand>
</feature>
<feature type="binding site" evidence="1">
    <location>
        <position position="14"/>
    </location>
    <ligand>
        <name>Mn(2+)</name>
        <dbReference type="ChEBI" id="CHEBI:29035"/>
    </ligand>
</feature>
<feature type="binding site" evidence="1">
    <location>
        <position position="167"/>
    </location>
    <ligand>
        <name>substrate</name>
    </ligand>
</feature>
<feature type="binding site" evidence="1">
    <location>
        <position position="196"/>
    </location>
    <ligand>
        <name>Mn(2+)</name>
        <dbReference type="ChEBI" id="CHEBI:29035"/>
    </ligand>
</feature>
<feature type="binding site" evidence="1">
    <location>
        <position position="196"/>
    </location>
    <ligand>
        <name>substrate</name>
    </ligand>
</feature>
<feature type="binding site" evidence="1">
    <location>
        <position position="198"/>
    </location>
    <ligand>
        <name>Mn(2+)</name>
        <dbReference type="ChEBI" id="CHEBI:29035"/>
    </ligand>
</feature>
<feature type="binding site" evidence="1">
    <location>
        <position position="287"/>
    </location>
    <ligand>
        <name>substrate</name>
    </ligand>
</feature>
<feature type="site" description="Transition state stabilizer" evidence="1">
    <location>
        <position position="13"/>
    </location>
</feature>
<reference key="1">
    <citation type="journal article" date="2007" name="Genome Res.">
        <title>Reductive evolution and niche adaptation inferred from the genome of Mycobacterium ulcerans, the causative agent of Buruli ulcer.</title>
        <authorList>
            <person name="Stinear T.P."/>
            <person name="Seemann T."/>
            <person name="Pidot S."/>
            <person name="Frigui W."/>
            <person name="Reysset G."/>
            <person name="Garnier T."/>
            <person name="Meurice G."/>
            <person name="Simon D."/>
            <person name="Bouchier C."/>
            <person name="Ma L."/>
            <person name="Tichit M."/>
            <person name="Porter J.L."/>
            <person name="Ryan J."/>
            <person name="Johnson P.D.R."/>
            <person name="Davies J.K."/>
            <person name="Jenkin G.A."/>
            <person name="Small P.L.C."/>
            <person name="Jones L.M."/>
            <person name="Tekaia F."/>
            <person name="Laval F."/>
            <person name="Daffe M."/>
            <person name="Parkhill J."/>
            <person name="Cole S.T."/>
        </authorList>
    </citation>
    <scope>NUCLEOTIDE SEQUENCE [LARGE SCALE GENOMIC DNA]</scope>
    <source>
        <strain>Agy99</strain>
    </source>
</reference>